<dbReference type="EMBL" id="AK017900">
    <property type="protein sequence ID" value="BAC25532.1"/>
    <property type="status" value="ALT_INIT"/>
    <property type="molecule type" value="mRNA"/>
</dbReference>
<dbReference type="EMBL" id="AK156313">
    <property type="protein sequence ID" value="BAE33668.1"/>
    <property type="molecule type" value="mRNA"/>
</dbReference>
<dbReference type="EMBL" id="AK163027">
    <property type="protein sequence ID" value="BAE37162.1"/>
    <property type="molecule type" value="mRNA"/>
</dbReference>
<dbReference type="EMBL" id="BC064065">
    <property type="protein sequence ID" value="AAH64065.2"/>
    <property type="status" value="ALT_INIT"/>
    <property type="molecule type" value="mRNA"/>
</dbReference>
<dbReference type="CCDS" id="CCDS48735.1">
    <molecule id="Q3U132-1"/>
</dbReference>
<dbReference type="RefSeq" id="NP_001416449.1">
    <molecule id="Q3U132-1"/>
    <property type="nucleotide sequence ID" value="NM_001429520.1"/>
</dbReference>
<dbReference type="RefSeq" id="NP_001416450.1">
    <molecule id="Q3U132-1"/>
    <property type="nucleotide sequence ID" value="NM_001429521.1"/>
</dbReference>
<dbReference type="RefSeq" id="NP_001416451.1">
    <molecule id="Q3U132-1"/>
    <property type="nucleotide sequence ID" value="NM_001429522.1"/>
</dbReference>
<dbReference type="RefSeq" id="NP_001416452.1">
    <molecule id="Q3U132-1"/>
    <property type="nucleotide sequence ID" value="NM_001429523.1"/>
</dbReference>
<dbReference type="RefSeq" id="NP_001416453.1">
    <molecule id="Q3U132-3"/>
    <property type="nucleotide sequence ID" value="NM_001429524.1"/>
</dbReference>
<dbReference type="RefSeq" id="NP_001416456.1">
    <molecule id="Q3U132-2"/>
    <property type="nucleotide sequence ID" value="NM_001429527.1"/>
</dbReference>
<dbReference type="RefSeq" id="NP_899087.2">
    <molecule id="Q3U132-1"/>
    <property type="nucleotide sequence ID" value="NM_183264.5"/>
</dbReference>
<dbReference type="RefSeq" id="XP_006514069.1">
    <property type="nucleotide sequence ID" value="XM_006514006.3"/>
</dbReference>
<dbReference type="FunCoup" id="Q3U132">
    <property type="interactions" value="86"/>
</dbReference>
<dbReference type="IntAct" id="Q3U132">
    <property type="interactions" value="2"/>
</dbReference>
<dbReference type="STRING" id="10090.ENSMUSP00000047284"/>
<dbReference type="iPTMnet" id="Q3U132"/>
<dbReference type="PhosphoSitePlus" id="Q3U132"/>
<dbReference type="jPOST" id="Q3U132"/>
<dbReference type="PaxDb" id="10090-ENSMUSP00000047284"/>
<dbReference type="ProteomicsDB" id="259000">
    <molecule id="Q3U132-1"/>
</dbReference>
<dbReference type="ProteomicsDB" id="259001">
    <molecule id="Q3U132-2"/>
</dbReference>
<dbReference type="ProteomicsDB" id="259002">
    <molecule id="Q3U132-3"/>
</dbReference>
<dbReference type="Antibodypedia" id="48438">
    <property type="antibodies" value="73 antibodies from 24 providers"/>
</dbReference>
<dbReference type="Ensembl" id="ENSMUST00000042586.10">
    <molecule id="Q3U132-1"/>
    <property type="protein sequence ID" value="ENSMUSP00000047284.9"/>
    <property type="gene ID" value="ENSMUSG00000034833.11"/>
</dbReference>
<dbReference type="Ensembl" id="ENSMUST00000217702.2">
    <molecule id="Q3U132-2"/>
    <property type="protein sequence ID" value="ENSMUSP00000152009.2"/>
    <property type="gene ID" value="ENSMUSG00000034833.11"/>
</dbReference>
<dbReference type="GeneID" id="67596"/>
<dbReference type="KEGG" id="mmu:67596"/>
<dbReference type="UCSC" id="uc007hrj.3">
    <molecule id="Q3U132-1"/>
    <property type="organism name" value="mouse"/>
</dbReference>
<dbReference type="UCSC" id="uc007hrk.2">
    <molecule id="Q3U132-2"/>
    <property type="organism name" value="mouse"/>
</dbReference>
<dbReference type="AGR" id="MGI:1914846"/>
<dbReference type="CTD" id="9840"/>
<dbReference type="MGI" id="MGI:1914846">
    <property type="gene designation" value="Tespa1"/>
</dbReference>
<dbReference type="VEuPathDB" id="HostDB:ENSMUSG00000034833"/>
<dbReference type="eggNOG" id="ENOG502QWSR">
    <property type="taxonomic scope" value="Eukaryota"/>
</dbReference>
<dbReference type="GeneTree" id="ENSGT00940000160763"/>
<dbReference type="HOGENOM" id="CLU_040123_0_0_1"/>
<dbReference type="InParanoid" id="Q3U132"/>
<dbReference type="OMA" id="APCCTHS"/>
<dbReference type="OrthoDB" id="55461at9989"/>
<dbReference type="PhylomeDB" id="Q3U132"/>
<dbReference type="TreeFam" id="TF331566"/>
<dbReference type="BioGRID-ORCS" id="67596">
    <property type="hits" value="2 hits in 77 CRISPR screens"/>
</dbReference>
<dbReference type="ChiTaRS" id="Tespa1">
    <property type="organism name" value="mouse"/>
</dbReference>
<dbReference type="PRO" id="PR:Q3U132"/>
<dbReference type="Proteomes" id="UP000000589">
    <property type="component" value="Chromosome 10"/>
</dbReference>
<dbReference type="RNAct" id="Q3U132">
    <property type="molecule type" value="protein"/>
</dbReference>
<dbReference type="Bgee" id="ENSMUSG00000034833">
    <property type="expression patterns" value="Expressed in thymus and 58 other cell types or tissues"/>
</dbReference>
<dbReference type="GO" id="GO:0008180">
    <property type="term" value="C:COP9 signalosome"/>
    <property type="evidence" value="ECO:0000250"/>
    <property type="project" value="UniProtKB"/>
</dbReference>
<dbReference type="GO" id="GO:0005737">
    <property type="term" value="C:cytoplasm"/>
    <property type="evidence" value="ECO:0000314"/>
    <property type="project" value="UniProtKB"/>
</dbReference>
<dbReference type="GO" id="GO:0005829">
    <property type="term" value="C:cytosol"/>
    <property type="evidence" value="ECO:0007669"/>
    <property type="project" value="Ensembl"/>
</dbReference>
<dbReference type="GO" id="GO:0005789">
    <property type="term" value="C:endoplasmic reticulum membrane"/>
    <property type="evidence" value="ECO:0007669"/>
    <property type="project" value="UniProtKB-SubCell"/>
</dbReference>
<dbReference type="GO" id="GO:0036398">
    <property type="term" value="C:TCR signalosome"/>
    <property type="evidence" value="ECO:0000314"/>
    <property type="project" value="MGI"/>
</dbReference>
<dbReference type="GO" id="GO:0043274">
    <property type="term" value="F:phospholipase binding"/>
    <property type="evidence" value="ECO:0000353"/>
    <property type="project" value="MGI"/>
</dbReference>
<dbReference type="GO" id="GO:0005102">
    <property type="term" value="F:signaling receptor binding"/>
    <property type="evidence" value="ECO:0007669"/>
    <property type="project" value="InterPro"/>
</dbReference>
<dbReference type="GO" id="GO:0010387">
    <property type="term" value="P:COP9 signalosome assembly"/>
    <property type="evidence" value="ECO:0000315"/>
    <property type="project" value="UniProtKB"/>
</dbReference>
<dbReference type="GO" id="GO:0033089">
    <property type="term" value="P:positive regulation of T cell differentiation in thymus"/>
    <property type="evidence" value="ECO:0000315"/>
    <property type="project" value="UniProtKB"/>
</dbReference>
<dbReference type="GO" id="GO:0050862">
    <property type="term" value="P:positive regulation of T cell receptor signaling pathway"/>
    <property type="evidence" value="ECO:0000315"/>
    <property type="project" value="UniProtKB"/>
</dbReference>
<dbReference type="GO" id="GO:0008104">
    <property type="term" value="P:protein localization"/>
    <property type="evidence" value="ECO:0000314"/>
    <property type="project" value="MGI"/>
</dbReference>
<dbReference type="GO" id="GO:0050856">
    <property type="term" value="P:regulation of T cell receptor signaling pathway"/>
    <property type="evidence" value="ECO:0000314"/>
    <property type="project" value="MGI"/>
</dbReference>
<dbReference type="GO" id="GO:0033077">
    <property type="term" value="P:T cell differentiation in thymus"/>
    <property type="evidence" value="ECO:0000314"/>
    <property type="project" value="MGI"/>
</dbReference>
<dbReference type="GO" id="GO:0036399">
    <property type="term" value="P:TCR signalosome assembly"/>
    <property type="evidence" value="ECO:0000315"/>
    <property type="project" value="MGI"/>
</dbReference>
<dbReference type="InterPro" id="IPR029325">
    <property type="entry name" value="ITPR-bd"/>
</dbReference>
<dbReference type="InterPro" id="IPR043444">
    <property type="entry name" value="TESPA1-like"/>
</dbReference>
<dbReference type="PANTHER" id="PTHR17469:SF1">
    <property type="entry name" value="PROTEIN TESPA1"/>
    <property type="match status" value="1"/>
</dbReference>
<dbReference type="PANTHER" id="PTHR17469">
    <property type="entry name" value="SPERM SPECIFIC ANTIGEN 2-RELATED"/>
    <property type="match status" value="1"/>
</dbReference>
<dbReference type="Pfam" id="PF14722">
    <property type="entry name" value="KRAP_IP3R_bind"/>
    <property type="match status" value="1"/>
</dbReference>
<dbReference type="SMART" id="SM01257">
    <property type="entry name" value="KRAP_IP3R_bind"/>
    <property type="match status" value="1"/>
</dbReference>
<protein>
    <recommendedName>
        <fullName>Protein TESPA1</fullName>
    </recommendedName>
    <alternativeName>
        <fullName>Thymocyte-expressed positive selection-associated protein 1</fullName>
    </alternativeName>
</protein>
<gene>
    <name type="primary">Tespa1</name>
</gene>
<reference key="1">
    <citation type="journal article" date="2012" name="Nat. Immunol.">
        <title>Tespa1 is involved in late thymocyte development through the regulation of TCR-mediated signaling.</title>
        <authorList>
            <person name="Wang D."/>
            <person name="Zheng M."/>
            <person name="Lei L."/>
            <person name="Ji J."/>
            <person name="Yao Y."/>
            <person name="Qiu Y."/>
            <person name="Ma L."/>
            <person name="Lou J."/>
            <person name="Ouyang C."/>
            <person name="Zhang X."/>
            <person name="He Y."/>
            <person name="Chi J."/>
            <person name="Wang L."/>
            <person name="Kuang Y."/>
            <person name="Wang J."/>
            <person name="Cao X."/>
            <person name="Lu L."/>
        </authorList>
    </citation>
    <scope>NUCLEOTIDE SEQUENCE [MRNA] (ISOFORM 1)</scope>
    <scope>FUNCTION</scope>
    <scope>TISSUE SPECIFICITY</scope>
    <scope>DEVELOPMENTAL STAGE</scope>
    <scope>DISRUPTION PHENOTYPE</scope>
    <source>
        <tissue>Thymocyte</tissue>
    </source>
</reference>
<reference key="2">
    <citation type="journal article" date="2005" name="Science">
        <title>The transcriptional landscape of the mammalian genome.</title>
        <authorList>
            <person name="Carninci P."/>
            <person name="Kasukawa T."/>
            <person name="Katayama S."/>
            <person name="Gough J."/>
            <person name="Frith M.C."/>
            <person name="Maeda N."/>
            <person name="Oyama R."/>
            <person name="Ravasi T."/>
            <person name="Lenhard B."/>
            <person name="Wells C."/>
            <person name="Kodzius R."/>
            <person name="Shimokawa K."/>
            <person name="Bajic V.B."/>
            <person name="Brenner S.E."/>
            <person name="Batalov S."/>
            <person name="Forrest A.R."/>
            <person name="Zavolan M."/>
            <person name="Davis M.J."/>
            <person name="Wilming L.G."/>
            <person name="Aidinis V."/>
            <person name="Allen J.E."/>
            <person name="Ambesi-Impiombato A."/>
            <person name="Apweiler R."/>
            <person name="Aturaliya R.N."/>
            <person name="Bailey T.L."/>
            <person name="Bansal M."/>
            <person name="Baxter L."/>
            <person name="Beisel K.W."/>
            <person name="Bersano T."/>
            <person name="Bono H."/>
            <person name="Chalk A.M."/>
            <person name="Chiu K.P."/>
            <person name="Choudhary V."/>
            <person name="Christoffels A."/>
            <person name="Clutterbuck D.R."/>
            <person name="Crowe M.L."/>
            <person name="Dalla E."/>
            <person name="Dalrymple B.P."/>
            <person name="de Bono B."/>
            <person name="Della Gatta G."/>
            <person name="di Bernardo D."/>
            <person name="Down T."/>
            <person name="Engstrom P."/>
            <person name="Fagiolini M."/>
            <person name="Faulkner G."/>
            <person name="Fletcher C.F."/>
            <person name="Fukushima T."/>
            <person name="Furuno M."/>
            <person name="Futaki S."/>
            <person name="Gariboldi M."/>
            <person name="Georgii-Hemming P."/>
            <person name="Gingeras T.R."/>
            <person name="Gojobori T."/>
            <person name="Green R.E."/>
            <person name="Gustincich S."/>
            <person name="Harbers M."/>
            <person name="Hayashi Y."/>
            <person name="Hensch T.K."/>
            <person name="Hirokawa N."/>
            <person name="Hill D."/>
            <person name="Huminiecki L."/>
            <person name="Iacono M."/>
            <person name="Ikeo K."/>
            <person name="Iwama A."/>
            <person name="Ishikawa T."/>
            <person name="Jakt M."/>
            <person name="Kanapin A."/>
            <person name="Katoh M."/>
            <person name="Kawasawa Y."/>
            <person name="Kelso J."/>
            <person name="Kitamura H."/>
            <person name="Kitano H."/>
            <person name="Kollias G."/>
            <person name="Krishnan S.P."/>
            <person name="Kruger A."/>
            <person name="Kummerfeld S.K."/>
            <person name="Kurochkin I.V."/>
            <person name="Lareau L.F."/>
            <person name="Lazarevic D."/>
            <person name="Lipovich L."/>
            <person name="Liu J."/>
            <person name="Liuni S."/>
            <person name="McWilliam S."/>
            <person name="Madan Babu M."/>
            <person name="Madera M."/>
            <person name="Marchionni L."/>
            <person name="Matsuda H."/>
            <person name="Matsuzawa S."/>
            <person name="Miki H."/>
            <person name="Mignone F."/>
            <person name="Miyake S."/>
            <person name="Morris K."/>
            <person name="Mottagui-Tabar S."/>
            <person name="Mulder N."/>
            <person name="Nakano N."/>
            <person name="Nakauchi H."/>
            <person name="Ng P."/>
            <person name="Nilsson R."/>
            <person name="Nishiguchi S."/>
            <person name="Nishikawa S."/>
            <person name="Nori F."/>
            <person name="Ohara O."/>
            <person name="Okazaki Y."/>
            <person name="Orlando V."/>
            <person name="Pang K.C."/>
            <person name="Pavan W.J."/>
            <person name="Pavesi G."/>
            <person name="Pesole G."/>
            <person name="Petrovsky N."/>
            <person name="Piazza S."/>
            <person name="Reed J."/>
            <person name="Reid J.F."/>
            <person name="Ring B.Z."/>
            <person name="Ringwald M."/>
            <person name="Rost B."/>
            <person name="Ruan Y."/>
            <person name="Salzberg S.L."/>
            <person name="Sandelin A."/>
            <person name="Schneider C."/>
            <person name="Schoenbach C."/>
            <person name="Sekiguchi K."/>
            <person name="Semple C.A."/>
            <person name="Seno S."/>
            <person name="Sessa L."/>
            <person name="Sheng Y."/>
            <person name="Shibata Y."/>
            <person name="Shimada H."/>
            <person name="Shimada K."/>
            <person name="Silva D."/>
            <person name="Sinclair B."/>
            <person name="Sperling S."/>
            <person name="Stupka E."/>
            <person name="Sugiura K."/>
            <person name="Sultana R."/>
            <person name="Takenaka Y."/>
            <person name="Taki K."/>
            <person name="Tammoja K."/>
            <person name="Tan S.L."/>
            <person name="Tang S."/>
            <person name="Taylor M.S."/>
            <person name="Tegner J."/>
            <person name="Teichmann S.A."/>
            <person name="Ueda H.R."/>
            <person name="van Nimwegen E."/>
            <person name="Verardo R."/>
            <person name="Wei C.L."/>
            <person name="Yagi K."/>
            <person name="Yamanishi H."/>
            <person name="Zabarovsky E."/>
            <person name="Zhu S."/>
            <person name="Zimmer A."/>
            <person name="Hide W."/>
            <person name="Bult C."/>
            <person name="Grimmond S.M."/>
            <person name="Teasdale R.D."/>
            <person name="Liu E.T."/>
            <person name="Brusic V."/>
            <person name="Quackenbush J."/>
            <person name="Wahlestedt C."/>
            <person name="Mattick J.S."/>
            <person name="Hume D.A."/>
            <person name="Kai C."/>
            <person name="Sasaki D."/>
            <person name="Tomaru Y."/>
            <person name="Fukuda S."/>
            <person name="Kanamori-Katayama M."/>
            <person name="Suzuki M."/>
            <person name="Aoki J."/>
            <person name="Arakawa T."/>
            <person name="Iida J."/>
            <person name="Imamura K."/>
            <person name="Itoh M."/>
            <person name="Kato T."/>
            <person name="Kawaji H."/>
            <person name="Kawagashira N."/>
            <person name="Kawashima T."/>
            <person name="Kojima M."/>
            <person name="Kondo S."/>
            <person name="Konno H."/>
            <person name="Nakano K."/>
            <person name="Ninomiya N."/>
            <person name="Nishio T."/>
            <person name="Okada M."/>
            <person name="Plessy C."/>
            <person name="Shibata K."/>
            <person name="Shiraki T."/>
            <person name="Suzuki S."/>
            <person name="Tagami M."/>
            <person name="Waki K."/>
            <person name="Watahiki A."/>
            <person name="Okamura-Oho Y."/>
            <person name="Suzuki H."/>
            <person name="Kawai J."/>
            <person name="Hayashizaki Y."/>
        </authorList>
    </citation>
    <scope>NUCLEOTIDE SEQUENCE [LARGE SCALE MRNA] (ISOFORMS 1 AND 2)</scope>
    <source>
        <strain>C57BL/6J</strain>
        <strain>NOD</strain>
        <tissue>Thymus</tissue>
    </source>
</reference>
<reference key="3">
    <citation type="journal article" date="2004" name="Genome Res.">
        <title>The status, quality, and expansion of the NIH full-length cDNA project: the Mammalian Gene Collection (MGC).</title>
        <authorList>
            <consortium name="The MGC Project Team"/>
        </authorList>
    </citation>
    <scope>NUCLEOTIDE SEQUENCE [LARGE SCALE MRNA] (ISOFORM 3)</scope>
    <source>
        <strain>C57BL/6J</strain>
        <tissue>Thymus</tissue>
    </source>
</reference>
<reference key="4">
    <citation type="journal article" date="2010" name="Cell">
        <title>A tissue-specific atlas of mouse protein phosphorylation and expression.</title>
        <authorList>
            <person name="Huttlin E.L."/>
            <person name="Jedrychowski M.P."/>
            <person name="Elias J.E."/>
            <person name="Goswami T."/>
            <person name="Rad R."/>
            <person name="Beausoleil S.A."/>
            <person name="Villen J."/>
            <person name="Haas W."/>
            <person name="Sowa M.E."/>
            <person name="Gygi S.P."/>
        </authorList>
    </citation>
    <scope>PHOSPHORYLATION [LARGE SCALE ANALYSIS] AT SER-312</scope>
    <scope>IDENTIFICATION BY MASS SPECTROMETRY [LARGE SCALE ANALYSIS]</scope>
    <source>
        <tissue>Lung</tissue>
        <tissue>Spleen</tissue>
    </source>
</reference>
<reference key="5">
    <citation type="journal article" date="2012" name="FEBS Open Bio">
        <title>Tespa1 is a novel inositol 1,4,5-trisphosphate receptor binding protein in T and B lymphocytes.</title>
        <authorList>
            <person name="Matsuzaki H."/>
            <person name="Fujimoto T."/>
            <person name="Ota T."/>
            <person name="Ogawa M."/>
            <person name="Tsunoda T."/>
            <person name="Doi K."/>
            <person name="Hamabashiri M."/>
            <person name="Tanaka M."/>
            <person name="Shirasawa S."/>
        </authorList>
    </citation>
    <scope>INTERACTION WITH ITPR1 AND ITPR3</scope>
    <scope>SUBCELLULAR LOCATION</scope>
    <scope>TISSUE SPECIFICITY</scope>
</reference>
<reference key="6">
    <citation type="journal article" date="2013" name="Biochem. Biophys. Res. Commun.">
        <title>Tespa1 protein is phosphorylated in response to store-operated calcium entry.</title>
        <authorList>
            <person name="Fujimoto T."/>
            <person name="Matsuzaki H."/>
            <person name="Tanaka M."/>
            <person name="Shirasawa S."/>
        </authorList>
    </citation>
    <scope>PHOSPHORYLATION</scope>
    <scope>INTERACTION WITH ITPR3</scope>
</reference>
<organism>
    <name type="scientific">Mus musculus</name>
    <name type="common">Mouse</name>
    <dbReference type="NCBI Taxonomy" id="10090"/>
    <lineage>
        <taxon>Eukaryota</taxon>
        <taxon>Metazoa</taxon>
        <taxon>Chordata</taxon>
        <taxon>Craniata</taxon>
        <taxon>Vertebrata</taxon>
        <taxon>Euteleostomi</taxon>
        <taxon>Mammalia</taxon>
        <taxon>Eutheria</taxon>
        <taxon>Euarchontoglires</taxon>
        <taxon>Glires</taxon>
        <taxon>Rodentia</taxon>
        <taxon>Myomorpha</taxon>
        <taxon>Muroidea</taxon>
        <taxon>Muridae</taxon>
        <taxon>Murinae</taxon>
        <taxon>Mus</taxon>
        <taxon>Mus</taxon>
    </lineage>
</organism>
<feature type="chain" id="PRO_0000315220" description="Protein TESPA1">
    <location>
        <begin position="1"/>
        <end position="458"/>
    </location>
</feature>
<feature type="region of interest" description="Disordered" evidence="3">
    <location>
        <begin position="328"/>
        <end position="356"/>
    </location>
</feature>
<feature type="region of interest" description="Disordered" evidence="3">
    <location>
        <begin position="439"/>
        <end position="458"/>
    </location>
</feature>
<feature type="compositionally biased region" description="Basic and acidic residues" evidence="3">
    <location>
        <begin position="328"/>
        <end position="339"/>
    </location>
</feature>
<feature type="compositionally biased region" description="Polar residues" evidence="3">
    <location>
        <begin position="346"/>
        <end position="356"/>
    </location>
</feature>
<feature type="compositionally biased region" description="Polar residues" evidence="3">
    <location>
        <begin position="439"/>
        <end position="450"/>
    </location>
</feature>
<feature type="modified residue" description="Phosphoserine" evidence="10">
    <location>
        <position position="312"/>
    </location>
</feature>
<feature type="splice variant" id="VSP_030490" description="In isoform 3." evidence="7">
    <location>
        <begin position="1"/>
        <end position="140"/>
    </location>
</feature>
<feature type="splice variant" id="VSP_030491" description="In isoform 2." evidence="8">
    <original>SRFKQVQTLAVTADAFFC</original>
    <variation>NVSLTQENIKMSHEHQLP</variation>
    <location>
        <begin position="221"/>
        <end position="238"/>
    </location>
</feature>
<feature type="splice variant" id="VSP_030492" description="In isoform 2." evidence="8">
    <location>
        <begin position="239"/>
        <end position="458"/>
    </location>
</feature>
<sequence length="458" mass="51768">MEASVLSPTSWEKRRAWLRQSRNWQTQVLEEEAAAALQDALDPEPSSLDDVFQEGNPINKIEDWLQGCGCRDTEEGLSEESGQSNYSGYSSHGTSFEDDLSLGAEATLLSTNGNLFSRNFLQTPRLCQLLDLGSSLASSSMTGGTNKTSSSISEILDQVQEDAEDILFSLGFGHENHKDTSRIPARFFSNPSQAKGINFQLFLKSQVQRMEMEDPCLMLASRFKQVQTLAVTADAFFCLYSYVSKTPVQKFTPSNMFWNFDPTDVPSIRILAPEPEPYSPRERLRRAISKMCLYTGSRDRLSSSYNNPKKNSLDQIVWEVMDRVKGEKIQQDPEHRQALGEESVPPIQNTNPSTSSLPCVSYPKEETQGDMCHAHALARPGPQYHINSTQVRRQLWVLQDINEKPRSAENESPWERKSKARKNLFQRVPVDKNIKSLNLPTIQQKQNQGQARHELTNL</sequence>
<proteinExistence type="evidence at protein level"/>
<comment type="function">
    <text evidence="1 4">May play a role in the regulation of inositol 1,4,5-trisphosphate receptor-mediated Ca(2+) release and mitochondrial Ca(2+) uptake via the mitochondria-associated endoplasmic reticulum membrane (MAM) compartment (By similarity). Required for the development and maturation of T-cells, its function being essential for the late stages of thymocyte development. Plays a role in T-cell antigen receptor (TCR)-mediated activation of the ERK and NFAT signaling pathways, possibly by serving as a scaffolding protein that promotes the assembly of the LAT signalosome in thymocytes.</text>
</comment>
<comment type="subunit">
    <text evidence="1">Interacts with PLCG1 and GRB2; the association is increased with prolonged stimulation of the TCR and may facilitate the assembly of the LAT signalosome (By similarity). Interacts with ITPR1 and ITPR3. Interacts with HSPA9 (By similarity).</text>
</comment>
<comment type="subcellular location">
    <subcellularLocation>
        <location evidence="2">Cytoplasm</location>
    </subcellularLocation>
    <subcellularLocation>
        <location evidence="6">Endoplasmic reticulum membrane</location>
    </subcellularLocation>
    <text evidence="2">May localize to mitochondria-associated endoplasmic reticulum membrane (MAM).</text>
</comment>
<comment type="alternative products">
    <event type="alternative splicing"/>
    <isoform>
        <id>Q3U132-1</id>
        <name>1</name>
        <sequence type="displayed"/>
    </isoform>
    <isoform>
        <id>Q3U132-2</id>
        <name>2</name>
        <sequence type="described" ref="VSP_030491 VSP_030492"/>
    </isoform>
    <isoform>
        <id>Q3U132-3</id>
        <name>3</name>
        <sequence type="described" ref="VSP_030490"/>
    </isoform>
</comment>
<comment type="tissue specificity">
    <text evidence="4 6">Expressed in lymphoid tissues, with highest expression levels detected in thymus and lower levels in spleen and lymph nodes (at protein level). Detected in CD4(+) and CD8(+) T-cells, B-cells and mast cells. Not detected in monocytes/macrophages.</text>
</comment>
<comment type="developmental stage">
    <text evidence="4">Present in fetal thymus at 14.5 dpc. Expressed during thymocyte maturation, the expression being highest in CD4(+)CD8(+) thymocytes and decreasing with maturation.</text>
</comment>
<comment type="PTM">
    <text evidence="5">May be phosphorylated in response to store-operated Ca(+2) entry.</text>
</comment>
<comment type="disruption phenotype">
    <text evidence="4">Mutant mice display defective T-cell development, resulting in notably fewer mature CD4(+) and CD8(+) cells in the thymus. The architecture of the thymus is altered, as characterized by smaller areas of the medulla. Mice also have fewer peripheral T-cells in spleen and display diminished T-cell antigen receptor (TCR)-mediated responses.</text>
</comment>
<comment type="sequence caution" evidence="9">
    <conflict type="erroneous initiation">
        <sequence resource="EMBL-CDS" id="AAH64065"/>
    </conflict>
    <text>Extended N-terminus.</text>
</comment>
<comment type="sequence caution" evidence="9">
    <conflict type="erroneous initiation">
        <sequence resource="EMBL-CDS" id="BAC25532"/>
    </conflict>
    <text>Truncated N-terminus.</text>
</comment>
<name>TESP1_MOUSE</name>
<keyword id="KW-0025">Alternative splicing</keyword>
<keyword id="KW-0963">Cytoplasm</keyword>
<keyword id="KW-0256">Endoplasmic reticulum</keyword>
<keyword id="KW-0472">Membrane</keyword>
<keyword id="KW-0597">Phosphoprotein</keyword>
<keyword id="KW-1185">Reference proteome</keyword>
<keyword id="KW-0736">Signalosome</keyword>
<accession>Q3U132</accession>
<accession>Q3TR68</accession>
<accession>Q8CEN9</accession>
<evidence type="ECO:0000250" key="1"/>
<evidence type="ECO:0000250" key="2">
    <source>
        <dbReference type="UniProtKB" id="A2RU30"/>
    </source>
</evidence>
<evidence type="ECO:0000256" key="3">
    <source>
        <dbReference type="SAM" id="MobiDB-lite"/>
    </source>
</evidence>
<evidence type="ECO:0000269" key="4">
    <source>
    </source>
</evidence>
<evidence type="ECO:0000269" key="5">
    <source>
    </source>
</evidence>
<evidence type="ECO:0000269" key="6">
    <source>
    </source>
</evidence>
<evidence type="ECO:0000303" key="7">
    <source>
    </source>
</evidence>
<evidence type="ECO:0000303" key="8">
    <source>
    </source>
</evidence>
<evidence type="ECO:0000305" key="9"/>
<evidence type="ECO:0007744" key="10">
    <source>
    </source>
</evidence>